<name>GPX4_RAT</name>
<protein>
    <recommendedName>
        <fullName evidence="14">Phospholipid hydroperoxide glutathione peroxidase</fullName>
        <shortName evidence="14">PHGPx</shortName>
        <ecNumber evidence="10">1.11.1.12</ecNumber>
    </recommendedName>
    <alternativeName>
        <fullName evidence="1">Glutathione peroxidase 4</fullName>
        <shortName evidence="1">GPx-4</shortName>
        <shortName evidence="1">GSHPx-4</shortName>
        <ecNumber evidence="3">1.11.1.9</ecNumber>
    </alternativeName>
</protein>
<organism>
    <name type="scientific">Rattus norvegicus</name>
    <name type="common">Rat</name>
    <dbReference type="NCBI Taxonomy" id="10116"/>
    <lineage>
        <taxon>Eukaryota</taxon>
        <taxon>Metazoa</taxon>
        <taxon>Chordata</taxon>
        <taxon>Craniata</taxon>
        <taxon>Vertebrata</taxon>
        <taxon>Euteleostomi</taxon>
        <taxon>Mammalia</taxon>
        <taxon>Eutheria</taxon>
        <taxon>Euarchontoglires</taxon>
        <taxon>Glires</taxon>
        <taxon>Rodentia</taxon>
        <taxon>Myomorpha</taxon>
        <taxon>Muroidea</taxon>
        <taxon>Muridae</taxon>
        <taxon>Murinae</taxon>
        <taxon>Rattus</taxon>
    </lineage>
</organism>
<proteinExistence type="evidence at protein level"/>
<gene>
    <name evidence="1" type="primary">Gpx4</name>
</gene>
<keyword id="KW-0024">Alternative initiation</keyword>
<keyword id="KW-0025">Alternative splicing</keyword>
<keyword id="KW-0963">Cytoplasm</keyword>
<keyword id="KW-0217">Developmental protein</keyword>
<keyword id="KW-0443">Lipid metabolism</keyword>
<keyword id="KW-0496">Mitochondrion</keyword>
<keyword id="KW-0539">Nucleus</keyword>
<keyword id="KW-0560">Oxidoreductase</keyword>
<keyword id="KW-0575">Peroxidase</keyword>
<keyword id="KW-0597">Phosphoprotein</keyword>
<keyword id="KW-1185">Reference proteome</keyword>
<keyword id="KW-0712">Selenocysteine</keyword>
<keyword id="KW-0809">Transit peptide</keyword>
<feature type="transit peptide" description="Mitochondrion" evidence="4">
    <location>
        <begin position="1"/>
        <end status="unknown"/>
    </location>
</feature>
<feature type="chain" id="PRO_0000013073" description="Phospholipid hydroperoxide glutathione peroxidase">
    <location>
        <begin status="unknown"/>
        <end position="197"/>
    </location>
</feature>
<feature type="active site" evidence="1">
    <location>
        <position position="73"/>
    </location>
</feature>
<feature type="non-standard amino acid" description="Selenocysteine" evidence="17">
    <location>
        <position position="73"/>
    </location>
</feature>
<feature type="modified residue" description="Phosphoserine" evidence="19">
    <location>
        <position position="40"/>
    </location>
</feature>
<feature type="splice variant" id="VSP_059350" description="In isoform Nuclear.">
    <original>MSWGRLSRLLKPALLCGALAVPGLAGTM</original>
    <variation>MGRAAARKRGRCRQRGRSPGGRRRREPGRQSPRKRPGPRRRRARARRRRRARPRRMEPIPEPFNPRPLLQDLPQTSNSHEFLGL</variation>
    <location>
        <begin position="1"/>
        <end position="28"/>
    </location>
</feature>
<feature type="splice variant" id="VSP_018746" description="In isoform Cytoplasmic." evidence="16">
    <location>
        <begin position="1"/>
        <end position="27"/>
    </location>
</feature>
<feature type="sequence conflict" description="In Ref. 1; AAC52503 and 3; CAD61276/CAD61277/CAD61278." evidence="16" ref="1 3">
    <original>A</original>
    <variation>S</variation>
    <location>
        <position position="45"/>
    </location>
</feature>
<feature type="sequence conflict" description="In Ref. 2; BAC87836." evidence="16" ref="2">
    <original>I</original>
    <variation>V</variation>
    <location>
        <position position="133"/>
    </location>
</feature>
<feature type="sequence conflict" description="In Ref. 4; AAS76675." evidence="16" ref="4">
    <original>N</original>
    <variation>S</variation>
    <location>
        <position position="136"/>
    </location>
</feature>
<feature type="modified residue" description="Phosphoserine" evidence="19">
    <location sequence="P36970-3">
        <position position="78"/>
    </location>
</feature>
<accession>P36970</accession>
<accession>Q6PZ55</accession>
<accession>Q76LU9</accession>
<accession>Q91XR8</accession>
<evidence type="ECO:0000250" key="1">
    <source>
        <dbReference type="UniProtKB" id="O70325"/>
    </source>
</evidence>
<evidence type="ECO:0000250" key="2">
    <source>
        <dbReference type="UniProtKB" id="P36968"/>
    </source>
</evidence>
<evidence type="ECO:0000250" key="3">
    <source>
        <dbReference type="UniProtKB" id="P36969"/>
    </source>
</evidence>
<evidence type="ECO:0000255" key="4"/>
<evidence type="ECO:0000269" key="5">
    <source>
    </source>
</evidence>
<evidence type="ECO:0000269" key="6">
    <source>
    </source>
</evidence>
<evidence type="ECO:0000269" key="7">
    <source>
    </source>
</evidence>
<evidence type="ECO:0000269" key="8">
    <source>
    </source>
</evidence>
<evidence type="ECO:0000269" key="9">
    <source>
    </source>
</evidence>
<evidence type="ECO:0000269" key="10">
    <source>
    </source>
</evidence>
<evidence type="ECO:0000269" key="11">
    <source>
    </source>
</evidence>
<evidence type="ECO:0000269" key="12">
    <source>
    </source>
</evidence>
<evidence type="ECO:0000269" key="13">
    <source>
    </source>
</evidence>
<evidence type="ECO:0000303" key="14">
    <source>
    </source>
</evidence>
<evidence type="ECO:0000303" key="15">
    <source>
    </source>
</evidence>
<evidence type="ECO:0000305" key="16"/>
<evidence type="ECO:0000305" key="17">
    <source>
    </source>
</evidence>
<evidence type="ECO:0000312" key="18">
    <source>
        <dbReference type="EMBL" id="AAK74113.1"/>
    </source>
</evidence>
<evidence type="ECO:0007744" key="19">
    <source>
    </source>
</evidence>
<reference key="1">
    <citation type="journal article" date="1995" name="J. Biol. Chem.">
        <title>Rat phospholipid-hydroperoxide glutathione peroxidase. cDNA cloning and identification of multiple transcription and translation start sites.</title>
        <authorList>
            <person name="Pushpa-Rekha T.R."/>
            <person name="Burdsall A.L."/>
            <person name="Oleksa L.M."/>
            <person name="Chisolm G.M."/>
            <person name="Driscoll D.M."/>
        </authorList>
    </citation>
    <scope>NUCLEOTIDE SEQUENCE [MRNA] (ISOFORM MITOCHONDRIAL)</scope>
    <source>
        <strain>Sprague-Dawley</strain>
        <tissue>Testis</tissue>
    </source>
</reference>
<reference key="2">
    <citation type="journal article" date="2003" name="Biochem. Biophys. Res. Commun.">
        <title>Molecular cloning and functional expression of nucleolar phospholipid hydroperoxide glutathione peroxidase in mammalian cells.</title>
        <authorList>
            <person name="Nakamura T."/>
            <person name="Imai H."/>
            <person name="Tsunashima N."/>
            <person name="Nakagawa Y."/>
        </authorList>
    </citation>
    <scope>NUCLEOTIDE SEQUENCE [MRNA] (ISOFORM NUCLEAR)</scope>
    <scope>SUBCELLULAR LOCATION (ISOFORM NUCLEAR)</scope>
    <scope>TISSUE SPECIFICITY (ISOFORM NUCLEAR)</scope>
    <source>
        <strain>Sprague-Dawley</strain>
        <tissue>Testis</tissue>
    </source>
</reference>
<reference key="3">
    <citation type="journal article" date="2003" name="J. Biol. Chem.">
        <title>Distinct promoters determine alternative transcription of gpx-4 into phospholipid-hydroperoxide glutathione peroxidase variants.</title>
        <authorList>
            <person name="Maiorino M."/>
            <person name="Scapin M."/>
            <person name="Ursini F."/>
            <person name="Biasolo M."/>
            <person name="Bosello V."/>
            <person name="Flohe L."/>
        </authorList>
    </citation>
    <scope>NUCLEOTIDE SEQUENCE [GENOMIC DNA]</scope>
    <scope>ALTERNATIVE SPLICING</scope>
    <source>
        <strain>Wistar</strain>
    </source>
</reference>
<reference key="4">
    <citation type="submission" date="2004-03" db="EMBL/GenBank/DDBJ databases">
        <title>Cloning of cDNA of rat phospholipid hydroperoxide/sperm nucleus glutathione peroxidase.</title>
        <authorList>
            <person name="Tramer F."/>
            <person name="Vetere A."/>
            <person name="Martinelli M."/>
            <person name="Paroni F."/>
            <person name="Marsich E."/>
            <person name="Sandri G."/>
            <person name="Panfili E."/>
        </authorList>
    </citation>
    <scope>NUCLEOTIDE SEQUENCE [MRNA] (ISOFORM NUCLEAR)</scope>
    <source>
        <strain>Wistar</strain>
    </source>
</reference>
<reference evidence="16" key="5">
    <citation type="journal article" date="2001" name="FASEB J.">
        <title>Identification of a specific sperm nuclei selenoenzyme necessary for protamine thiol cross-linking during sperm maturation.</title>
        <authorList>
            <person name="Pfeifer H."/>
            <person name="Conrad M."/>
            <person name="Roethlein D."/>
            <person name="Kyriakopoulos A."/>
            <person name="Brielmeier M."/>
            <person name="Bornkamm G.W."/>
            <person name="Behne D."/>
        </authorList>
    </citation>
    <scope>NUCLEOTIDE SEQUENCE [MRNA] (ISOFORM NUCLEAR)</scope>
    <scope>SUBCELLULAR LOCATION (ISOFORM NUCLEAR)</scope>
    <source>
        <tissue evidence="18">Testis</tissue>
    </source>
</reference>
<reference key="6">
    <citation type="journal article" date="1995" name="J. Biochem.">
        <title>Molecular cloning and functional expression of a cDNA for rat phospholipid hydroperoxide glutathione peroxidase: 3'-untranslated region of the gene is necessary for functional expression.</title>
        <authorList>
            <person name="Imai H."/>
            <person name="Sumi D."/>
            <person name="Hanamoto A."/>
            <person name="Arai M."/>
            <person name="Sugiyama A."/>
            <person name="Chiba N."/>
            <person name="Kuchino Y."/>
            <person name="Nakagawa Y."/>
        </authorList>
    </citation>
    <scope>NUCLEOTIDE SEQUENCE [MRNA] OF 17-197 (ISOFORM MITOCHONDRIAL)</scope>
    <source>
        <strain>Sprague-Dawley</strain>
        <tissue>Brain</tissue>
    </source>
</reference>
<reference key="7">
    <citation type="submission" date="1993-10" db="EMBL/GenBank/DDBJ databases">
        <title>Rat liver phospholipid hydroperoxide glutathione peroxidase.</title>
        <authorList>
            <person name="Sunde R.A."/>
            <person name="Dyer J.A."/>
            <person name="Moran T.V."/>
            <person name="Evenson J.K."/>
        </authorList>
    </citation>
    <scope>NUCLEOTIDE SEQUENCE [MRNA] OF 21-197 (ISOFORM MITOCHONDRIAL)</scope>
    <source>
        <strain>Sprague-Dawley</strain>
        <tissue>Liver</tissue>
    </source>
</reference>
<reference key="8">
    <citation type="journal article" date="1992" name="J. Biol. Chem.">
        <title>Phospholipid hydroperoxide glutathione peroxidase of rat testis. Gonadotropin dependence and immunocytochemical identification.</title>
        <authorList>
            <person name="Roveri A."/>
            <person name="Casasco A."/>
            <person name="Maiorino M."/>
            <person name="Dalan P."/>
            <person name="Calligaro A."/>
            <person name="Ursini F."/>
        </authorList>
    </citation>
    <scope>FUNCTION</scope>
    <scope>CATALYTIC ACTIVITY</scope>
    <scope>SUBCELLULAR LOCATION</scope>
    <scope>TISSUE SPECIFICITY</scope>
    <source>
        <tissue>Testis</tissue>
    </source>
</reference>
<reference key="9">
    <citation type="journal article" date="1998" name="J. Biol. Chem.">
        <title>Suppression of leukotriene formation in RBL-2H3 cells that overexpressed phospholipid hydroperoxide glutathione peroxidase.</title>
        <authorList>
            <person name="Imai H."/>
            <person name="Narashima K."/>
            <person name="Arai M."/>
            <person name="Sakamoto H."/>
            <person name="Chiba N."/>
            <person name="Nakagawa Y."/>
        </authorList>
    </citation>
    <scope>FUNCTION (ISOFORM CYTOPLASMIC)</scope>
</reference>
<reference key="10">
    <citation type="journal article" date="1999" name="J. Biol. Chem.">
        <title>Mitochondrial phospholipid hydroperoxide glutathione peroxidase plays a major role in preventing oxidative injury to cells.</title>
        <authorList>
            <person name="Arai M."/>
            <person name="Imai H."/>
            <person name="Koumura T."/>
            <person name="Yoshida M."/>
            <person name="Emoto K."/>
            <person name="Umeda M."/>
            <person name="Chiba N."/>
            <person name="Nakagawa Y."/>
        </authorList>
    </citation>
    <scope>FUNCTION (ISOFORM MITOCHONDRIAL)</scope>
</reference>
<reference key="11">
    <citation type="journal article" date="1999" name="J. Biol. Chem.">
        <title>Mitochondrial phospholipid hydroperoxide glutathione peroxidase suppresses apoptosis mediated by a mitochondrial death pathway.</title>
        <authorList>
            <person name="Nomura K."/>
            <person name="Imai H."/>
            <person name="Koumura T."/>
            <person name="Arai M."/>
            <person name="Nakagawa Y."/>
        </authorList>
    </citation>
    <scope>FUNCTION (ISOFORM MITOCHONDRIAL)</scope>
</reference>
<reference key="12">
    <citation type="journal article" date="2000" name="Biochem. J.">
        <title>Mitochondrial phospholipid hydroperoxide glutathione peroxidase inhibits the release of cytochrome c from mitochondria by suppressing the peroxidation of cardiolipin in hypoglycaemia-induced apoptosis.</title>
        <authorList>
            <person name="Nomura K."/>
            <person name="Imai H."/>
            <person name="Koumura T."/>
            <person name="Kobayashi T."/>
            <person name="Nakagawa Y."/>
        </authorList>
    </citation>
    <scope>FUNCTION (ISOFORM MITOCHONDRIAL)</scope>
</reference>
<reference key="13">
    <citation type="journal article" date="2000" name="J. Biol. Chem.">
        <title>Involvement of phospholipid hydroperoxide glutathione peroxidase in the modulation of prostaglandin D2 synthesis.</title>
        <authorList>
            <person name="Sakamoto H."/>
            <person name="Imai H."/>
            <person name="Nakagawa Y."/>
        </authorList>
    </citation>
    <scope>FUNCTION (ISOFORM CYTOPLASMIC)</scope>
</reference>
<reference key="14">
    <citation type="journal article" date="2009" name="Reproduction">
        <title>Identification of novel immunodominant epididymal sperm proteins using combinatorial approach.</title>
        <authorList>
            <person name="Khan S.A."/>
            <person name="Suryawanshi A.R."/>
            <person name="Ranpura S.A."/>
            <person name="Jadhav S.V."/>
            <person name="Khole V.V."/>
        </authorList>
    </citation>
    <scope>IDENTIFICATION BY MASS SPECTROMETRY</scope>
    <scope>TISSUE SPECIFICITY</scope>
</reference>
<reference key="15">
    <citation type="journal article" date="2012" name="Nat. Commun.">
        <title>Quantitative maps of protein phosphorylation sites across 14 different rat organs and tissues.</title>
        <authorList>
            <person name="Lundby A."/>
            <person name="Secher A."/>
            <person name="Lage K."/>
            <person name="Nordsborg N.B."/>
            <person name="Dmytriyev A."/>
            <person name="Lundby C."/>
            <person name="Olsen J.V."/>
        </authorList>
    </citation>
    <scope>PHOSPHORYLATION [LARGE SCALE ANALYSIS] AT SER-40</scope>
    <scope>PHOSPHORYLATION [LARGE SCALE ANALYSIS] AT SER-78 (ISOFORM NUCLEAR)</scope>
    <scope>IDENTIFICATION BY MASS SPECTROMETRY [LARGE SCALE ANALYSIS]</scope>
</reference>
<dbReference type="EC" id="1.11.1.12" evidence="10"/>
<dbReference type="EC" id="1.11.1.9" evidence="3"/>
<dbReference type="EMBL" id="U37427">
    <property type="protein sequence ID" value="AAC52503.2"/>
    <property type="molecule type" value="mRNA"/>
</dbReference>
<dbReference type="EMBL" id="AB072798">
    <property type="protein sequence ID" value="BAC87836.1"/>
    <property type="molecule type" value="mRNA"/>
</dbReference>
<dbReference type="EMBL" id="AJ537598">
    <property type="protein sequence ID" value="CAD61276.1"/>
    <property type="molecule type" value="Genomic_DNA"/>
</dbReference>
<dbReference type="EMBL" id="AJ537598">
    <property type="protein sequence ID" value="CAD61277.1"/>
    <property type="molecule type" value="Genomic_DNA"/>
</dbReference>
<dbReference type="EMBL" id="AJ537598">
    <property type="protein sequence ID" value="CAD61278.1"/>
    <property type="molecule type" value="Genomic_DNA"/>
</dbReference>
<dbReference type="EMBL" id="X82679">
    <property type="protein sequence ID" value="CAA57996.1"/>
    <property type="molecule type" value="mRNA"/>
</dbReference>
<dbReference type="EMBL" id="AY570513">
    <property type="protein sequence ID" value="AAS76675.1"/>
    <property type="molecule type" value="mRNA"/>
</dbReference>
<dbReference type="EMBL" id="AF274028">
    <property type="protein sequence ID" value="AAK74113.1"/>
    <property type="molecule type" value="mRNA"/>
</dbReference>
<dbReference type="EMBL" id="L24896">
    <property type="protein sequence ID" value="AAA41842.2"/>
    <property type="molecule type" value="mRNA"/>
</dbReference>
<dbReference type="PIR" id="JC4332">
    <property type="entry name" value="JC4332"/>
</dbReference>
<dbReference type="RefSeq" id="NP_001034938.1">
    <molecule id="P36970-3"/>
    <property type="nucleotide sequence ID" value="NM_001039849.3"/>
</dbReference>
<dbReference type="RefSeq" id="NP_001354972.1">
    <molecule id="P36970-2"/>
    <property type="nucleotide sequence ID" value="NM_001368043.1"/>
</dbReference>
<dbReference type="RefSeq" id="NP_058861.3">
    <molecule id="P36970-1"/>
    <property type="nucleotide sequence ID" value="NM_017165.3"/>
</dbReference>
<dbReference type="FunCoup" id="P36970">
    <property type="interactions" value="2236"/>
</dbReference>
<dbReference type="STRING" id="10116.ENSRNOP00000076309"/>
<dbReference type="PeroxiBase" id="3733">
    <property type="entry name" value="RnoGPx04-A"/>
</dbReference>
<dbReference type="PeroxiBase" id="3812">
    <property type="entry name" value="RnoGPx04-B"/>
</dbReference>
<dbReference type="PeroxiBase" id="3813">
    <property type="entry name" value="RnoGPx04-C"/>
</dbReference>
<dbReference type="iPTMnet" id="P36970"/>
<dbReference type="PhosphoSitePlus" id="P36970"/>
<dbReference type="SwissPalm" id="P36970"/>
<dbReference type="PaxDb" id="10116-ENSRNOP00000018691"/>
<dbReference type="Ensembl" id="ENSRNOT00000093376.2">
    <molecule id="P36970-1"/>
    <property type="protein sequence ID" value="ENSRNOP00000076198.1"/>
    <property type="gene ID" value="ENSRNOG00000013604.8"/>
</dbReference>
<dbReference type="Ensembl" id="ENSRNOT00000093426.2">
    <molecule id="P36970-3"/>
    <property type="protein sequence ID" value="ENSRNOP00000076309.1"/>
    <property type="gene ID" value="ENSRNOG00000013604.8"/>
</dbReference>
<dbReference type="GeneID" id="29328"/>
<dbReference type="KEGG" id="rno:29328"/>
<dbReference type="AGR" id="RGD:69226"/>
<dbReference type="CTD" id="2879"/>
<dbReference type="RGD" id="69226">
    <property type="gene designation" value="Gpx4"/>
</dbReference>
<dbReference type="eggNOG" id="KOG1651">
    <property type="taxonomic scope" value="Eukaryota"/>
</dbReference>
<dbReference type="GeneTree" id="ENSGT00940000161913"/>
<dbReference type="InParanoid" id="P36970"/>
<dbReference type="OMA" id="TFPMTEK"/>
<dbReference type="OrthoDB" id="59251at9989"/>
<dbReference type="PhylomeDB" id="P36970"/>
<dbReference type="BRENDA" id="1.11.1.12">
    <property type="organism ID" value="5301"/>
</dbReference>
<dbReference type="Reactome" id="R-RNO-2142712">
    <property type="pathway name" value="Synthesis of 12-eicosatetraenoic acid derivatives"/>
</dbReference>
<dbReference type="Reactome" id="R-RNO-2142770">
    <property type="pathway name" value="Synthesis of 15-eicosatetraenoic acid derivatives"/>
</dbReference>
<dbReference type="Reactome" id="R-RNO-9018676">
    <property type="pathway name" value="Biosynthesis of D-series resolvins"/>
</dbReference>
<dbReference type="Reactome" id="R-RNO-9018896">
    <property type="pathway name" value="Biosynthesis of E-series 18(S)-resolvins"/>
</dbReference>
<dbReference type="Reactome" id="R-RNO-9020265">
    <property type="pathway name" value="Biosynthesis of aspirin-triggered D-series resolvins"/>
</dbReference>
<dbReference type="Reactome" id="R-RNO-9023661">
    <property type="pathway name" value="Biosynthesis of E-series 18(R)-resolvins"/>
</dbReference>
<dbReference type="SABIO-RK" id="P36970"/>
<dbReference type="CD-CODE" id="246D7041">
    <property type="entry name" value="Chromatoid body"/>
</dbReference>
<dbReference type="PRO" id="PR:P36970"/>
<dbReference type="Proteomes" id="UP000002494">
    <property type="component" value="Chromosome 7"/>
</dbReference>
<dbReference type="Bgee" id="ENSRNOG00000013604">
    <property type="expression patterns" value="Expressed in testis and 20 other cell types or tissues"/>
</dbReference>
<dbReference type="ExpressionAtlas" id="P36970">
    <property type="expression patterns" value="baseline and differential"/>
</dbReference>
<dbReference type="GO" id="GO:0005829">
    <property type="term" value="C:cytosol"/>
    <property type="evidence" value="ECO:0000314"/>
    <property type="project" value="FlyBase"/>
</dbReference>
<dbReference type="GO" id="GO:0005739">
    <property type="term" value="C:mitochondrion"/>
    <property type="evidence" value="ECO:0000314"/>
    <property type="project" value="FlyBase"/>
</dbReference>
<dbReference type="GO" id="GO:0005635">
    <property type="term" value="C:nuclear envelope"/>
    <property type="evidence" value="ECO:0000266"/>
    <property type="project" value="RGD"/>
</dbReference>
<dbReference type="GO" id="GO:0005730">
    <property type="term" value="C:nucleolus"/>
    <property type="evidence" value="ECO:0007669"/>
    <property type="project" value="UniProtKB-SubCell"/>
</dbReference>
<dbReference type="GO" id="GO:0005634">
    <property type="term" value="C:nucleus"/>
    <property type="evidence" value="ECO:0000250"/>
    <property type="project" value="UniProtKB"/>
</dbReference>
<dbReference type="GO" id="GO:0032991">
    <property type="term" value="C:protein-containing complex"/>
    <property type="evidence" value="ECO:0000266"/>
    <property type="project" value="RGD"/>
</dbReference>
<dbReference type="GO" id="GO:0004602">
    <property type="term" value="F:glutathione peroxidase activity"/>
    <property type="evidence" value="ECO:0000250"/>
    <property type="project" value="UniProtKB"/>
</dbReference>
<dbReference type="GO" id="GO:0042802">
    <property type="term" value="F:identical protein binding"/>
    <property type="evidence" value="ECO:0000266"/>
    <property type="project" value="RGD"/>
</dbReference>
<dbReference type="GO" id="GO:0047066">
    <property type="term" value="F:phospholipid-hydroperoxide glutathione peroxidase activity"/>
    <property type="evidence" value="ECO:0000314"/>
    <property type="project" value="RGD"/>
</dbReference>
<dbReference type="GO" id="GO:0008430">
    <property type="term" value="F:selenium binding"/>
    <property type="evidence" value="ECO:0000314"/>
    <property type="project" value="RGD"/>
</dbReference>
<dbReference type="GO" id="GO:0006915">
    <property type="term" value="P:apoptotic process"/>
    <property type="evidence" value="ECO:0000266"/>
    <property type="project" value="RGD"/>
</dbReference>
<dbReference type="GO" id="GO:0019369">
    <property type="term" value="P:arachidonate metabolic process"/>
    <property type="evidence" value="ECO:0000250"/>
    <property type="project" value="UniProtKB"/>
</dbReference>
<dbReference type="GO" id="GO:0021549">
    <property type="term" value="P:cerebellum development"/>
    <property type="evidence" value="ECO:0000266"/>
    <property type="project" value="RGD"/>
</dbReference>
<dbReference type="GO" id="GO:0006325">
    <property type="term" value="P:chromatin organization"/>
    <property type="evidence" value="ECO:0000250"/>
    <property type="project" value="UniProtKB"/>
</dbReference>
<dbReference type="GO" id="GO:0016358">
    <property type="term" value="P:dendrite development"/>
    <property type="evidence" value="ECO:0000266"/>
    <property type="project" value="RGD"/>
</dbReference>
<dbReference type="GO" id="GO:0019372">
    <property type="term" value="P:lipoxygenase pathway"/>
    <property type="evidence" value="ECO:0000250"/>
    <property type="project" value="UniProtKB"/>
</dbReference>
<dbReference type="GO" id="GO:0035264">
    <property type="term" value="P:multicellular organism growth"/>
    <property type="evidence" value="ECO:0000266"/>
    <property type="project" value="RGD"/>
</dbReference>
<dbReference type="GO" id="GO:0110076">
    <property type="term" value="P:negative regulation of ferroptosis"/>
    <property type="evidence" value="ECO:0000250"/>
    <property type="project" value="UniProtKB"/>
</dbReference>
<dbReference type="GO" id="GO:0051258">
    <property type="term" value="P:protein polymerization"/>
    <property type="evidence" value="ECO:0000266"/>
    <property type="project" value="RGD"/>
</dbReference>
<dbReference type="GO" id="GO:0032355">
    <property type="term" value="P:response to estradiol"/>
    <property type="evidence" value="ECO:0000270"/>
    <property type="project" value="RGD"/>
</dbReference>
<dbReference type="GO" id="GO:0032496">
    <property type="term" value="P:response to lipopolysaccharide"/>
    <property type="evidence" value="ECO:0000266"/>
    <property type="project" value="RGD"/>
</dbReference>
<dbReference type="GO" id="GO:0006979">
    <property type="term" value="P:response to oxidative stress"/>
    <property type="evidence" value="ECO:0000250"/>
    <property type="project" value="UniProtKB"/>
</dbReference>
<dbReference type="GO" id="GO:0007283">
    <property type="term" value="P:spermatogenesis"/>
    <property type="evidence" value="ECO:0000250"/>
    <property type="project" value="UniProtKB"/>
</dbReference>
<dbReference type="CDD" id="cd00340">
    <property type="entry name" value="GSH_Peroxidase"/>
    <property type="match status" value="1"/>
</dbReference>
<dbReference type="FunFam" id="3.40.30.10:FF:000111">
    <property type="entry name" value="Glutathione peroxidase"/>
    <property type="match status" value="1"/>
</dbReference>
<dbReference type="Gene3D" id="3.40.30.10">
    <property type="entry name" value="Glutaredoxin"/>
    <property type="match status" value="1"/>
</dbReference>
<dbReference type="InterPro" id="IPR000889">
    <property type="entry name" value="Glutathione_peroxidase"/>
</dbReference>
<dbReference type="InterPro" id="IPR029759">
    <property type="entry name" value="GPX_AS"/>
</dbReference>
<dbReference type="InterPro" id="IPR029760">
    <property type="entry name" value="GPX_CS"/>
</dbReference>
<dbReference type="InterPro" id="IPR036249">
    <property type="entry name" value="Thioredoxin-like_sf"/>
</dbReference>
<dbReference type="PANTHER" id="PTHR11592">
    <property type="entry name" value="GLUTATHIONE PEROXIDASE"/>
    <property type="match status" value="1"/>
</dbReference>
<dbReference type="PANTHER" id="PTHR11592:SF134">
    <property type="entry name" value="PHOSPHOLIPID HYDROPEROXIDE GLUTATHIONE PEROXIDASE"/>
    <property type="match status" value="1"/>
</dbReference>
<dbReference type="Pfam" id="PF00255">
    <property type="entry name" value="GSHPx"/>
    <property type="match status" value="1"/>
</dbReference>
<dbReference type="PIRSF" id="PIRSF000303">
    <property type="entry name" value="Glutathion_perox"/>
    <property type="match status" value="1"/>
</dbReference>
<dbReference type="PRINTS" id="PR01011">
    <property type="entry name" value="GLUTPROXDASE"/>
</dbReference>
<dbReference type="SUPFAM" id="SSF52833">
    <property type="entry name" value="Thioredoxin-like"/>
    <property type="match status" value="1"/>
</dbReference>
<dbReference type="PROSITE" id="PS00460">
    <property type="entry name" value="GLUTATHIONE_PEROXID_1"/>
    <property type="match status" value="1"/>
</dbReference>
<dbReference type="PROSITE" id="PS00763">
    <property type="entry name" value="GLUTATHIONE_PEROXID_2"/>
    <property type="match status" value="1"/>
</dbReference>
<dbReference type="PROSITE" id="PS51355">
    <property type="entry name" value="GLUTATHIONE_PEROXID_3"/>
    <property type="match status" value="1"/>
</dbReference>
<comment type="function">
    <text evidence="1 2 3 10 13">Essential antioxidant peroxidase that directly reduces phospholipid hydroperoxide even if they are incorporated in membranes and lipoproteins (By similarity). Can also reduce fatty acid hydroperoxide, cholesterol hydroperoxide and thymine hydroperoxide (By similarity). Plays a key role in protecting cells from oxidative damage by preventing membrane lipid peroxidation (PubMed:1556123, PubMed:9988735). Required to prevent cells from ferroptosis, a non-apoptotic cell death resulting from an iron-dependent accumulation of lipid reactive oxygen species (By similarity). The presence of selenocysteine (Sec) versus Cys at the active site is essential for life: it provides resistance to overoxidation and prevents cells against ferroptosis (By similarity). The presence of Sec at the active site is also essential for the survival of a specific type of parvalbumin-positive interneurons, thereby preventing against fatal epileptic seizures (By similarity). May be required to protect cells from the toxicity of ingested lipid hydroperoxides (By similarity). Required for normal sperm development and male fertility (By similarity). Essential for maturation and survival of photoreceptor cells (By similarity). Plays a role in a primary T-cell response to viral and parasitic infection by protecting T-cells from ferroptosis and by supporting T-cell expansion (By similarity). Plays a role of glutathione peroxidase in platelets in the arachidonic acid metabolism (By similarity). Reduces hydroperoxy ester lipids formed by a 15-lipoxygenase that may play a role as down-regulator of the cellular 15-lipoxygenase pathway (By similarity). Can also reduce small soluble hydroperoxides such as H2O2, cumene hydroperoxide and tert-butyl hydroperoxide (By similarity).</text>
</comment>
<comment type="function">
    <molecule>Isoform Cytoplasmic</molecule>
    <text evidence="7 12">Specifically able to suppress the production of leukotriene and prostaglandin in response to several stimuli by reducing fatty acid hydroperoxide (PubMed:11010961, PubMed:9442035).</text>
</comment>
<comment type="function">
    <molecule>Isoform Mitochondrial</molecule>
    <text evidence="1 5 6 13">Specifically required to prevent mitochondrial cell death by mediating reduction of cardiolipin hydroperoxide (PubMed:10506188, PubMed:10998361, PubMed:9988735). Also required for normal sperm development and male fertility (By similarity).</text>
</comment>
<comment type="function">
    <molecule>Isoform Nuclear</molecule>
    <text evidence="1">Required for male fertility by stabilizing the condensed chromatin in sperm nuclei.</text>
</comment>
<comment type="catalytic activity">
    <reaction evidence="10">
        <text>a hydroperoxy polyunsaturated fatty acid + 2 glutathione = a hydroxy polyunsaturated fatty acid + glutathione disulfide + H2O</text>
        <dbReference type="Rhea" id="RHEA:19057"/>
        <dbReference type="ChEBI" id="CHEBI:15377"/>
        <dbReference type="ChEBI" id="CHEBI:57925"/>
        <dbReference type="ChEBI" id="CHEBI:58297"/>
        <dbReference type="ChEBI" id="CHEBI:131871"/>
        <dbReference type="ChEBI" id="CHEBI:134019"/>
        <dbReference type="EC" id="1.11.1.12"/>
    </reaction>
    <physiologicalReaction direction="left-to-right" evidence="16">
        <dbReference type="Rhea" id="RHEA:19058"/>
    </physiologicalReaction>
</comment>
<comment type="catalytic activity">
    <reaction evidence="3">
        <text>2 glutathione + H2O2 = glutathione disulfide + 2 H2O</text>
        <dbReference type="Rhea" id="RHEA:16833"/>
        <dbReference type="ChEBI" id="CHEBI:15377"/>
        <dbReference type="ChEBI" id="CHEBI:16240"/>
        <dbReference type="ChEBI" id="CHEBI:57925"/>
        <dbReference type="ChEBI" id="CHEBI:58297"/>
        <dbReference type="EC" id="1.11.1.9"/>
    </reaction>
    <physiologicalReaction direction="left-to-right" evidence="3">
        <dbReference type="Rhea" id="RHEA:16834"/>
    </physiologicalReaction>
</comment>
<comment type="catalytic activity">
    <reaction evidence="3">
        <text>tert-butyl hydroperoxide + 2 glutathione = tert-butanol + glutathione disulfide + H2O</text>
        <dbReference type="Rhea" id="RHEA:69412"/>
        <dbReference type="ChEBI" id="CHEBI:15377"/>
        <dbReference type="ChEBI" id="CHEBI:45895"/>
        <dbReference type="ChEBI" id="CHEBI:57925"/>
        <dbReference type="ChEBI" id="CHEBI:58297"/>
        <dbReference type="ChEBI" id="CHEBI:64090"/>
    </reaction>
    <physiologicalReaction direction="left-to-right" evidence="3">
        <dbReference type="Rhea" id="RHEA:69413"/>
    </physiologicalReaction>
</comment>
<comment type="catalytic activity">
    <reaction evidence="3">
        <text>cumene hydroperoxide + 2 glutathione = 2-phenylpropan-2-ol + glutathione disulfide + H2O</text>
        <dbReference type="Rhea" id="RHEA:69651"/>
        <dbReference type="ChEBI" id="CHEBI:15377"/>
        <dbReference type="ChEBI" id="CHEBI:57925"/>
        <dbReference type="ChEBI" id="CHEBI:58297"/>
        <dbReference type="ChEBI" id="CHEBI:78673"/>
        <dbReference type="ChEBI" id="CHEBI:131607"/>
    </reaction>
    <physiologicalReaction direction="left-to-right" evidence="3">
        <dbReference type="Rhea" id="RHEA:69652"/>
    </physiologicalReaction>
</comment>
<comment type="catalytic activity">
    <reaction evidence="3">
        <text>(9S)-hydroperoxy-(10E,12Z)-octadecadienoate + 2 glutathione = (9S)-hydroxy-(10E,12Z)-octadecadienoate + glutathione disulfide + H2O</text>
        <dbReference type="Rhea" id="RHEA:76687"/>
        <dbReference type="ChEBI" id="CHEBI:15377"/>
        <dbReference type="ChEBI" id="CHEBI:57925"/>
        <dbReference type="ChEBI" id="CHEBI:58297"/>
        <dbReference type="ChEBI" id="CHEBI:60955"/>
        <dbReference type="ChEBI" id="CHEBI:77852"/>
    </reaction>
    <physiologicalReaction direction="left-to-right" evidence="3">
        <dbReference type="Rhea" id="RHEA:76688"/>
    </physiologicalReaction>
</comment>
<comment type="catalytic activity">
    <reaction evidence="3">
        <text>(13S)-hydroperoxy-(9Z,11E)-octadecadienoate + 2 glutathione = (13S)-hydroxy-(9Z,11E)-octadecadienoate + glutathione disulfide + H2O</text>
        <dbReference type="Rhea" id="RHEA:48888"/>
        <dbReference type="ChEBI" id="CHEBI:15377"/>
        <dbReference type="ChEBI" id="CHEBI:57466"/>
        <dbReference type="ChEBI" id="CHEBI:57925"/>
        <dbReference type="ChEBI" id="CHEBI:58297"/>
        <dbReference type="ChEBI" id="CHEBI:90850"/>
    </reaction>
    <physiologicalReaction direction="left-to-right" evidence="3">
        <dbReference type="Rhea" id="RHEA:48889"/>
    </physiologicalReaction>
</comment>
<comment type="catalytic activity">
    <reaction evidence="3">
        <text>(5S)-hydroperoxy-(6E,8Z,11Z,14Z)-eicosatetraenoate + 2 glutathione = (5S)-hydroxy-(6E,8Z,11Z,14Z)-eicosatetraenoate + glutathione disulfide + H2O</text>
        <dbReference type="Rhea" id="RHEA:48620"/>
        <dbReference type="ChEBI" id="CHEBI:15377"/>
        <dbReference type="ChEBI" id="CHEBI:57450"/>
        <dbReference type="ChEBI" id="CHEBI:57925"/>
        <dbReference type="ChEBI" id="CHEBI:58297"/>
        <dbReference type="ChEBI" id="CHEBI:90632"/>
    </reaction>
    <physiologicalReaction direction="left-to-right" evidence="3">
        <dbReference type="Rhea" id="RHEA:48621"/>
    </physiologicalReaction>
</comment>
<comment type="catalytic activity">
    <reaction evidence="3">
        <text>(12R)-hydroperoxy-(5Z,8Z,10E,14Z)-eicosatetraenoate + 2 glutathione = (12R)-hydroxy-(5Z,8Z,10E,14Z)-eicosatetraenoate + glutathione disulfide + H2O</text>
        <dbReference type="Rhea" id="RHEA:76691"/>
        <dbReference type="ChEBI" id="CHEBI:15377"/>
        <dbReference type="ChEBI" id="CHEBI:57925"/>
        <dbReference type="ChEBI" id="CHEBI:58297"/>
        <dbReference type="ChEBI" id="CHEBI:75230"/>
        <dbReference type="ChEBI" id="CHEBI:83343"/>
    </reaction>
    <physiologicalReaction direction="left-to-right" evidence="3">
        <dbReference type="Rhea" id="RHEA:76692"/>
    </physiologicalReaction>
</comment>
<comment type="catalytic activity">
    <reaction evidence="3">
        <text>(12S)-hydroperoxy-(5Z,8Z,10E,14Z)-eicosatetraenoate + 2 glutathione = (12S)-hydroxy-(5Z,8Z,10E,14Z)-eicosatetraenoate + glutathione disulfide + H2O</text>
        <dbReference type="Rhea" id="RHEA:50708"/>
        <dbReference type="ChEBI" id="CHEBI:15377"/>
        <dbReference type="ChEBI" id="CHEBI:57444"/>
        <dbReference type="ChEBI" id="CHEBI:57925"/>
        <dbReference type="ChEBI" id="CHEBI:58297"/>
        <dbReference type="ChEBI" id="CHEBI:90680"/>
    </reaction>
    <physiologicalReaction direction="left-to-right" evidence="3">
        <dbReference type="Rhea" id="RHEA:50709"/>
    </physiologicalReaction>
</comment>
<comment type="catalytic activity">
    <reaction evidence="3">
        <text>(15S)-hydroperoxy-(5Z,8Z,11Z,13E)-eicosatetraenoate + 2 glutathione = (15S)-hydroxy-(5Z,8Z,11Z,13E)-eicosatetraenoate + glutathione disulfide + H2O</text>
        <dbReference type="Rhea" id="RHEA:76695"/>
        <dbReference type="ChEBI" id="CHEBI:15377"/>
        <dbReference type="ChEBI" id="CHEBI:57409"/>
        <dbReference type="ChEBI" id="CHEBI:57446"/>
        <dbReference type="ChEBI" id="CHEBI:57925"/>
        <dbReference type="ChEBI" id="CHEBI:58297"/>
    </reaction>
    <physiologicalReaction direction="left-to-right" evidence="3">
        <dbReference type="Rhea" id="RHEA:76696"/>
    </physiologicalReaction>
</comment>
<comment type="catalytic activity">
    <reaction evidence="3">
        <text>(5S)-hydroperoxy-(6E,8Z,11Z,14Z,17Z)-eicosapentaenoate + 2 glutathione = (5S)-hydroxy-(6E,8Z,11Z,14Z,17Z)-eicosapentaenoate + glutathione disulfide + H2O</text>
        <dbReference type="Rhea" id="RHEA:76699"/>
        <dbReference type="ChEBI" id="CHEBI:15377"/>
        <dbReference type="ChEBI" id="CHEBI:57925"/>
        <dbReference type="ChEBI" id="CHEBI:58297"/>
        <dbReference type="ChEBI" id="CHEBI:195399"/>
        <dbReference type="ChEBI" id="CHEBI:195400"/>
    </reaction>
    <physiologicalReaction direction="left-to-right" evidence="3">
        <dbReference type="Rhea" id="RHEA:76700"/>
    </physiologicalReaction>
</comment>
<comment type="catalytic activity">
    <reaction evidence="3">
        <text>(12S)-hydroperoxy-(5Z,8Z,10E,14Z,17Z)-eicosapentaenoate + 2 glutathione = (12S)-hydroxy-(5Z,8Z,10E,14Z,17Z)-eicosapentaenoate + glutathione disulfide + H2O</text>
        <dbReference type="Rhea" id="RHEA:76703"/>
        <dbReference type="ChEBI" id="CHEBI:15377"/>
        <dbReference type="ChEBI" id="CHEBI:57925"/>
        <dbReference type="ChEBI" id="CHEBI:58297"/>
        <dbReference type="ChEBI" id="CHEBI:90772"/>
        <dbReference type="ChEBI" id="CHEBI:195401"/>
    </reaction>
    <physiologicalReaction direction="left-to-right" evidence="3">
        <dbReference type="Rhea" id="RHEA:76704"/>
    </physiologicalReaction>
</comment>
<comment type="catalytic activity">
    <reaction evidence="3">
        <text>(15S)-hydroperoxy-(5Z,8Z,11Z,13E,17Z)-eicosapentaenoate + 2 glutathione = (15S)-hydroxy-(5Z,8Z,11Z,13E,17Z)-eicosapentaenoate + glutathione disulfide + H2O</text>
        <dbReference type="Rhea" id="RHEA:76707"/>
        <dbReference type="ChEBI" id="CHEBI:15377"/>
        <dbReference type="ChEBI" id="CHEBI:57925"/>
        <dbReference type="ChEBI" id="CHEBI:58297"/>
        <dbReference type="ChEBI" id="CHEBI:132087"/>
        <dbReference type="ChEBI" id="CHEBI:194369"/>
    </reaction>
    <physiologicalReaction direction="left-to-right" evidence="3">
        <dbReference type="Rhea" id="RHEA:76708"/>
    </physiologicalReaction>
</comment>
<comment type="catalytic activity">
    <reaction evidence="3">
        <text>(15S)-hydroperoxy-(11Z,13E)-eicosadienoate + 2 glutathione = (15S)-hydroxy-(11Z,13E)-eicosadienoate + glutathione disulfide + H2O</text>
        <dbReference type="Rhea" id="RHEA:76711"/>
        <dbReference type="ChEBI" id="CHEBI:15377"/>
        <dbReference type="ChEBI" id="CHEBI:57925"/>
        <dbReference type="ChEBI" id="CHEBI:58297"/>
        <dbReference type="ChEBI" id="CHEBI:144832"/>
        <dbReference type="ChEBI" id="CHEBI:195402"/>
    </reaction>
    <physiologicalReaction direction="left-to-right" evidence="3">
        <dbReference type="Rhea" id="RHEA:76712"/>
    </physiologicalReaction>
</comment>
<comment type="catalytic activity">
    <reaction evidence="3">
        <text>(17S)-hydroperoxy-(4Z,7Z,10Z,13Z,15E,19Z)-docosahexaenoate + 2 glutathione = (17S)-hydroxy-(4Z,7Z,10Z,13Z,15E,19Z)-docosahexaenoate + glutathione disulfide + H2O</text>
        <dbReference type="Rhea" id="RHEA:76715"/>
        <dbReference type="ChEBI" id="CHEBI:15377"/>
        <dbReference type="ChEBI" id="CHEBI:57925"/>
        <dbReference type="ChEBI" id="CHEBI:58297"/>
        <dbReference type="ChEBI" id="CHEBI:133795"/>
        <dbReference type="ChEBI" id="CHEBI:195403"/>
    </reaction>
    <physiologicalReaction direction="left-to-right" evidence="3">
        <dbReference type="Rhea" id="RHEA:76716"/>
    </physiologicalReaction>
</comment>
<comment type="catalytic activity">
    <reaction evidence="3">
        <text>a hydroperoxy-1,2-diacyl-glycero-3-phosphocholine + 2 glutathione = a hydroxy-1,2-diacyl-glycero-3-phosphocholine + glutathione disulfide + H2O</text>
        <dbReference type="Rhea" id="RHEA:76731"/>
        <dbReference type="ChEBI" id="CHEBI:15377"/>
        <dbReference type="ChEBI" id="CHEBI:57925"/>
        <dbReference type="ChEBI" id="CHEBI:58297"/>
        <dbReference type="ChEBI" id="CHEBI:195423"/>
        <dbReference type="ChEBI" id="CHEBI:195424"/>
    </reaction>
    <physiologicalReaction direction="left-to-right" evidence="3">
        <dbReference type="Rhea" id="RHEA:76732"/>
    </physiologicalReaction>
</comment>
<comment type="subunit">
    <text evidence="3">Monomer. Has a tendency to form higher mass oligomers. Interacts with FUNDC1; this interaction promotes GPX4 recruitment into mitochondria through TOM/TIM complex where it is degraded by mitophagy.</text>
</comment>
<comment type="subcellular location">
    <molecule>Isoform Nuclear</molecule>
    <subcellularLocation>
        <location evidence="8">Nucleus</location>
    </subcellularLocation>
    <subcellularLocation>
        <location evidence="9">Nucleus</location>
        <location evidence="9">Nucleolus</location>
    </subcellularLocation>
</comment>
<comment type="subcellular location">
    <molecule>Isoform Mitochondrial</molecule>
    <subcellularLocation>
        <location evidence="10">Mitochondrion</location>
    </subcellularLocation>
    <subcellularLocation>
        <location evidence="10">Cytoplasm</location>
    </subcellularLocation>
</comment>
<comment type="subcellular location">
    <molecule>Isoform Cytoplasmic</molecule>
    <subcellularLocation>
        <location evidence="10">Cytoplasm</location>
    </subcellularLocation>
</comment>
<comment type="alternative products">
    <event type="alternative splicing"/>
    <event type="alternative initiation"/>
    <isoform>
        <id>P36970-1</id>
        <name>Mitochondrial</name>
        <name evidence="15">L-form</name>
        <sequence type="displayed"/>
    </isoform>
    <isoform>
        <id>P36970-2</id>
        <name>Cytoplasmic</name>
        <name evidence="15">S-form</name>
        <sequence type="described" ref="VSP_018746"/>
    </isoform>
    <isoform>
        <id>P36970-3</id>
        <name>Nuclear</name>
        <sequence type="described" ref="VSP_059350"/>
    </isoform>
</comment>
<comment type="tissue specificity">
    <text evidence="9 10 11">Present primarily in testis (PubMed:1556123). Expressed in flagella of epididymal sperm (PubMed:19423663). Isoform Cytoplasmic: Highly expressed in testis (PubMed:14575705). Present in spermatogonia, spermatocyte and spermatid (at protein level) (PubMed:14575705).</text>
</comment>
<comment type="miscellaneous">
    <molecule>Isoform Cytoplasmic</molecule>
    <text evidence="16">Produced by alternative initiation at Met-28 of isoform Mitochondrial.</text>
</comment>
<comment type="similarity">
    <text evidence="16">Belongs to the glutathione peroxidase family.</text>
</comment>
<sequence>MSWGRLSRLLKPALLCGALAVPGLAGTMCASRDDWRCARSMHEFAAKDIDGHMVCLDKYRGCVCIVTNVASQUGKTDVNYTQLVDLHARYAECGLRILAFPCNQFGRQEPGSNQEIKEFAAGYNVRFDMYSKICVNGDDAHPLWKWMKVQPKGRGMLGNAIKWNFTKFLIDKNGCVVKRYGPMEEPQVIEKDLPCYL</sequence>